<name>VKT10_DABSI</name>
<sequence>YNPASNQCQGF</sequence>
<keyword id="KW-0903">Direct protein sequencing</keyword>
<keyword id="KW-1015">Disulfide bond</keyword>
<keyword id="KW-0646">Protease inhibitor</keyword>
<keyword id="KW-0964">Secreted</keyword>
<keyword id="KW-0722">Serine protease inhibitor</keyword>
<dbReference type="GO" id="GO:0005576">
    <property type="term" value="C:extracellular region"/>
    <property type="evidence" value="ECO:0007669"/>
    <property type="project" value="UniProtKB-SubCell"/>
</dbReference>
<dbReference type="GO" id="GO:0004867">
    <property type="term" value="F:serine-type endopeptidase inhibitor activity"/>
    <property type="evidence" value="ECO:0007669"/>
    <property type="project" value="UniProtKB-KW"/>
</dbReference>
<reference evidence="5" key="1">
    <citation type="submission" date="2006-11" db="UniProtKB">
        <title>Molecular analysis of the bioactive components in snake venoms.</title>
        <authorList>
            <person name="Guo C.T."/>
        </authorList>
    </citation>
    <scope>PROTEIN SEQUENCE</scope>
    <scope>FUNCTION</scope>
    <scope>SUBCELLULAR LOCATION</scope>
    <scope>TISSUE SPECIFICITY</scope>
    <source>
        <strain evidence="3">China</strain>
        <tissue evidence="3">Venom</tissue>
    </source>
</reference>
<evidence type="ECO:0000250" key="1">
    <source>
        <dbReference type="UniProtKB" id="P00992"/>
    </source>
</evidence>
<evidence type="ECO:0000255" key="2">
    <source>
        <dbReference type="PROSITE-ProRule" id="PRU00031"/>
    </source>
</evidence>
<evidence type="ECO:0000269" key="3">
    <source ref="1"/>
</evidence>
<evidence type="ECO:0000303" key="4">
    <source ref="1"/>
</evidence>
<evidence type="ECO:0000305" key="5"/>
<proteinExistence type="evidence at protein level"/>
<comment type="function">
    <text evidence="3">Serine protease inhibitor that inhibits trypsin.</text>
</comment>
<comment type="subcellular location">
    <subcellularLocation>
        <location evidence="3">Secreted</location>
    </subcellularLocation>
</comment>
<comment type="tissue specificity">
    <text evidence="3">Expressed by the venom gland.</text>
</comment>
<comment type="similarity">
    <text evidence="5">Belongs to the venom Kunitz-type family.</text>
</comment>
<accession>P85041</accession>
<protein>
    <recommendedName>
        <fullName>Kunitz-type serine protease inhibitor C10</fullName>
    </recommendedName>
    <alternativeName>
        <fullName evidence="4">BPTI-10</fullName>
    </alternativeName>
    <alternativeName>
        <fullName>Trypsin inhibitor 10</fullName>
    </alternativeName>
    <alternativeName>
        <fullName evidence="4">Trypsin inhibitor C10</fullName>
    </alternativeName>
</protein>
<feature type="peptide" id="PRO_0000414615" description="Kunitz-type serine protease inhibitor C10">
    <location>
        <begin position="1" status="less than"/>
        <end position="11" status="greater than"/>
    </location>
</feature>
<feature type="domain" description="BPTI/Kunitz inhibitor" evidence="2">
    <location>
        <begin position="1" status="less than"/>
        <end position="11" status="greater than"/>
    </location>
</feature>
<feature type="disulfide bond" evidence="1 2">
    <location>
        <begin position="8"/>
        <end status="unknown"/>
    </location>
</feature>
<feature type="non-terminal residue" evidence="4">
    <location>
        <position position="1"/>
    </location>
</feature>
<feature type="non-terminal residue" evidence="4">
    <location>
        <position position="11"/>
    </location>
</feature>
<organism>
    <name type="scientific">Daboia siamensis</name>
    <name type="common">Eastern Russel's viper</name>
    <name type="synonym">Daboia russelii siamensis</name>
    <dbReference type="NCBI Taxonomy" id="343250"/>
    <lineage>
        <taxon>Eukaryota</taxon>
        <taxon>Metazoa</taxon>
        <taxon>Chordata</taxon>
        <taxon>Craniata</taxon>
        <taxon>Vertebrata</taxon>
        <taxon>Euteleostomi</taxon>
        <taxon>Lepidosauria</taxon>
        <taxon>Squamata</taxon>
        <taxon>Bifurcata</taxon>
        <taxon>Unidentata</taxon>
        <taxon>Episquamata</taxon>
        <taxon>Toxicofera</taxon>
        <taxon>Serpentes</taxon>
        <taxon>Colubroidea</taxon>
        <taxon>Viperidae</taxon>
        <taxon>Viperinae</taxon>
        <taxon>Daboia</taxon>
    </lineage>
</organism>